<name>RS12_BURL3</name>
<protein>
    <recommendedName>
        <fullName evidence="2">Small ribosomal subunit protein uS12</fullName>
    </recommendedName>
    <alternativeName>
        <fullName evidence="4">30S ribosomal protein S12</fullName>
    </alternativeName>
</protein>
<dbReference type="EMBL" id="CP000151">
    <property type="protein sequence ID" value="ABB07044.1"/>
    <property type="molecule type" value="Genomic_DNA"/>
</dbReference>
<dbReference type="RefSeq" id="WP_006400662.1">
    <property type="nucleotide sequence ID" value="NZ_LDWP01000105.1"/>
</dbReference>
<dbReference type="SMR" id="Q39KH2"/>
<dbReference type="GeneID" id="98108172"/>
<dbReference type="KEGG" id="bur:Bcep18194_A3442"/>
<dbReference type="HOGENOM" id="CLU_104295_1_2_4"/>
<dbReference type="Proteomes" id="UP000002705">
    <property type="component" value="Chromosome 1"/>
</dbReference>
<dbReference type="GO" id="GO:0015935">
    <property type="term" value="C:small ribosomal subunit"/>
    <property type="evidence" value="ECO:0007669"/>
    <property type="project" value="InterPro"/>
</dbReference>
<dbReference type="GO" id="GO:0019843">
    <property type="term" value="F:rRNA binding"/>
    <property type="evidence" value="ECO:0007669"/>
    <property type="project" value="UniProtKB-UniRule"/>
</dbReference>
<dbReference type="GO" id="GO:0003735">
    <property type="term" value="F:structural constituent of ribosome"/>
    <property type="evidence" value="ECO:0007669"/>
    <property type="project" value="InterPro"/>
</dbReference>
<dbReference type="GO" id="GO:0000049">
    <property type="term" value="F:tRNA binding"/>
    <property type="evidence" value="ECO:0007669"/>
    <property type="project" value="UniProtKB-UniRule"/>
</dbReference>
<dbReference type="GO" id="GO:0006412">
    <property type="term" value="P:translation"/>
    <property type="evidence" value="ECO:0007669"/>
    <property type="project" value="UniProtKB-UniRule"/>
</dbReference>
<dbReference type="CDD" id="cd03368">
    <property type="entry name" value="Ribosomal_S12"/>
    <property type="match status" value="1"/>
</dbReference>
<dbReference type="FunFam" id="2.40.50.140:FF:000001">
    <property type="entry name" value="30S ribosomal protein S12"/>
    <property type="match status" value="1"/>
</dbReference>
<dbReference type="Gene3D" id="2.40.50.140">
    <property type="entry name" value="Nucleic acid-binding proteins"/>
    <property type="match status" value="1"/>
</dbReference>
<dbReference type="HAMAP" id="MF_00403_B">
    <property type="entry name" value="Ribosomal_uS12_B"/>
    <property type="match status" value="1"/>
</dbReference>
<dbReference type="InterPro" id="IPR012340">
    <property type="entry name" value="NA-bd_OB-fold"/>
</dbReference>
<dbReference type="InterPro" id="IPR006032">
    <property type="entry name" value="Ribosomal_uS12"/>
</dbReference>
<dbReference type="InterPro" id="IPR005679">
    <property type="entry name" value="Ribosomal_uS12_bac"/>
</dbReference>
<dbReference type="NCBIfam" id="TIGR00981">
    <property type="entry name" value="rpsL_bact"/>
    <property type="match status" value="1"/>
</dbReference>
<dbReference type="PANTHER" id="PTHR11652">
    <property type="entry name" value="30S RIBOSOMAL PROTEIN S12 FAMILY MEMBER"/>
    <property type="match status" value="1"/>
</dbReference>
<dbReference type="Pfam" id="PF00164">
    <property type="entry name" value="Ribosom_S12_S23"/>
    <property type="match status" value="1"/>
</dbReference>
<dbReference type="PIRSF" id="PIRSF002133">
    <property type="entry name" value="Ribosomal_S12/S23"/>
    <property type="match status" value="1"/>
</dbReference>
<dbReference type="PRINTS" id="PR01034">
    <property type="entry name" value="RIBOSOMALS12"/>
</dbReference>
<dbReference type="SUPFAM" id="SSF50249">
    <property type="entry name" value="Nucleic acid-binding proteins"/>
    <property type="match status" value="1"/>
</dbReference>
<dbReference type="PROSITE" id="PS00055">
    <property type="entry name" value="RIBOSOMAL_S12"/>
    <property type="match status" value="1"/>
</dbReference>
<proteinExistence type="inferred from homology"/>
<feature type="chain" id="PRO_0000226380" description="Small ribosomal subunit protein uS12">
    <location>
        <begin position="1"/>
        <end position="126"/>
    </location>
</feature>
<feature type="region of interest" description="Disordered" evidence="3">
    <location>
        <begin position="1"/>
        <end position="28"/>
    </location>
</feature>
<feature type="region of interest" description="Disordered" evidence="3">
    <location>
        <begin position="103"/>
        <end position="126"/>
    </location>
</feature>
<feature type="compositionally biased region" description="Basic residues" evidence="3">
    <location>
        <begin position="113"/>
        <end position="126"/>
    </location>
</feature>
<feature type="modified residue" description="3-methylthioaspartic acid" evidence="1">
    <location>
        <position position="89"/>
    </location>
</feature>
<comment type="function">
    <text evidence="2">With S4 and S5 plays an important role in translational accuracy.</text>
</comment>
<comment type="function">
    <text evidence="2">Interacts with and stabilizes bases of the 16S rRNA that are involved in tRNA selection in the A site and with the mRNA backbone. Located at the interface of the 30S and 50S subunits, it traverses the body of the 30S subunit contacting proteins on the other side and probably holding the rRNA structure together. The combined cluster of proteins S8, S12 and S17 appears to hold together the shoulder and platform of the 30S subunit.</text>
</comment>
<comment type="subunit">
    <text evidence="2">Part of the 30S ribosomal subunit. Contacts proteins S8 and S17. May interact with IF1 in the 30S initiation complex.</text>
</comment>
<comment type="similarity">
    <text evidence="2">Belongs to the universal ribosomal protein uS12 family.</text>
</comment>
<gene>
    <name evidence="2" type="primary">rpsL</name>
    <name type="ordered locus">Bcep18194_A3442</name>
</gene>
<evidence type="ECO:0000250" key="1"/>
<evidence type="ECO:0000255" key="2">
    <source>
        <dbReference type="HAMAP-Rule" id="MF_00403"/>
    </source>
</evidence>
<evidence type="ECO:0000256" key="3">
    <source>
        <dbReference type="SAM" id="MobiDB-lite"/>
    </source>
</evidence>
<evidence type="ECO:0000305" key="4"/>
<organism>
    <name type="scientific">Burkholderia lata (strain ATCC 17760 / DSM 23089 / LMG 22485 / NCIMB 9086 / R18194 / 383)</name>
    <dbReference type="NCBI Taxonomy" id="482957"/>
    <lineage>
        <taxon>Bacteria</taxon>
        <taxon>Pseudomonadati</taxon>
        <taxon>Pseudomonadota</taxon>
        <taxon>Betaproteobacteria</taxon>
        <taxon>Burkholderiales</taxon>
        <taxon>Burkholderiaceae</taxon>
        <taxon>Burkholderia</taxon>
        <taxon>Burkholderia cepacia complex</taxon>
    </lineage>
</organism>
<keyword id="KW-0488">Methylation</keyword>
<keyword id="KW-0687">Ribonucleoprotein</keyword>
<keyword id="KW-0689">Ribosomal protein</keyword>
<keyword id="KW-0694">RNA-binding</keyword>
<keyword id="KW-0699">rRNA-binding</keyword>
<keyword id="KW-0820">tRNA-binding</keyword>
<reference key="1">
    <citation type="submission" date="2005-10" db="EMBL/GenBank/DDBJ databases">
        <title>Complete sequence of chromosome 1 of Burkholderia sp. 383.</title>
        <authorList>
            <consortium name="US DOE Joint Genome Institute"/>
            <person name="Copeland A."/>
            <person name="Lucas S."/>
            <person name="Lapidus A."/>
            <person name="Barry K."/>
            <person name="Detter J.C."/>
            <person name="Glavina T."/>
            <person name="Hammon N."/>
            <person name="Israni S."/>
            <person name="Pitluck S."/>
            <person name="Chain P."/>
            <person name="Malfatti S."/>
            <person name="Shin M."/>
            <person name="Vergez L."/>
            <person name="Schmutz J."/>
            <person name="Larimer F."/>
            <person name="Land M."/>
            <person name="Kyrpides N."/>
            <person name="Lykidis A."/>
            <person name="Richardson P."/>
        </authorList>
    </citation>
    <scope>NUCLEOTIDE SEQUENCE [LARGE SCALE GENOMIC DNA]</scope>
    <source>
        <strain>ATCC 17760 / DSM 23089 / LMG 22485 / NCIMB 9086 / R18194 / 383</strain>
    </source>
</reference>
<sequence>MPTINQLVRKGRQSETTKSKSPALQDCPQRRGVCTRVYTTTPKKPNSALRKVAKVRLTNGFEVISYIGGEGHNLQEHSVVLIRGGRVKDLPGVRYHMVRGSLDTQGVKDRKQARSKYGAKRAKAAK</sequence>
<accession>Q39KH2</accession>